<comment type="function">
    <text evidence="1">F(1)F(0) ATP synthase produces ATP from ADP in the presence of a proton or sodium gradient. F-type ATPases consist of two structural domains, F(1) containing the extramembraneous catalytic core and F(0) containing the membrane proton channel, linked together by a central stalk and a peripheral stalk. During catalysis, ATP synthesis in the catalytic domain of F(1) is coupled via a rotary mechanism of the central stalk subunits to proton translocation.</text>
</comment>
<comment type="function">
    <text evidence="1">Component of the F(0) channel, it forms part of the peripheral stalk, linking F(1) to F(0).</text>
</comment>
<comment type="subunit">
    <text evidence="1">F-type ATPases have 2 components, F(1) - the catalytic core - and F(0) - the membrane proton channel. F(1) has five subunits: alpha(3), beta(3), gamma(1), delta(1), epsilon(1). F(0) has three main subunits: a(1), b(2) and c(10-14). The alpha and beta chains form an alternating ring which encloses part of the gamma chain. F(1) is attached to F(0) by a central stalk formed by the gamma and epsilon chains, while a peripheral stalk is formed by the delta and b chains.</text>
</comment>
<comment type="subcellular location">
    <subcellularLocation>
        <location evidence="1">Cell membrane</location>
        <topology evidence="1">Single-pass membrane protein</topology>
    </subcellularLocation>
</comment>
<comment type="similarity">
    <text evidence="1">Belongs to the ATPase B chain family.</text>
</comment>
<keyword id="KW-0066">ATP synthesis</keyword>
<keyword id="KW-1003">Cell membrane</keyword>
<keyword id="KW-0138">CF(0)</keyword>
<keyword id="KW-0375">Hydrogen ion transport</keyword>
<keyword id="KW-0406">Ion transport</keyword>
<keyword id="KW-0472">Membrane</keyword>
<keyword id="KW-0812">Transmembrane</keyword>
<keyword id="KW-1133">Transmembrane helix</keyword>
<keyword id="KW-0813">Transport</keyword>
<dbReference type="EMBL" id="AP009493">
    <property type="protein sequence ID" value="BAG18996.1"/>
    <property type="molecule type" value="Genomic_DNA"/>
</dbReference>
<dbReference type="SMR" id="B1W0A7"/>
<dbReference type="KEGG" id="sgr:SGR_2167"/>
<dbReference type="eggNOG" id="COG0711">
    <property type="taxonomic scope" value="Bacteria"/>
</dbReference>
<dbReference type="HOGENOM" id="CLU_079215_5_2_11"/>
<dbReference type="Proteomes" id="UP000001685">
    <property type="component" value="Chromosome"/>
</dbReference>
<dbReference type="GO" id="GO:0005886">
    <property type="term" value="C:plasma membrane"/>
    <property type="evidence" value="ECO:0007669"/>
    <property type="project" value="UniProtKB-SubCell"/>
</dbReference>
<dbReference type="GO" id="GO:0045259">
    <property type="term" value="C:proton-transporting ATP synthase complex"/>
    <property type="evidence" value="ECO:0007669"/>
    <property type="project" value="UniProtKB-KW"/>
</dbReference>
<dbReference type="GO" id="GO:0046933">
    <property type="term" value="F:proton-transporting ATP synthase activity, rotational mechanism"/>
    <property type="evidence" value="ECO:0007669"/>
    <property type="project" value="UniProtKB-UniRule"/>
</dbReference>
<dbReference type="GO" id="GO:0046961">
    <property type="term" value="F:proton-transporting ATPase activity, rotational mechanism"/>
    <property type="evidence" value="ECO:0007669"/>
    <property type="project" value="TreeGrafter"/>
</dbReference>
<dbReference type="CDD" id="cd06503">
    <property type="entry name" value="ATP-synt_Fo_b"/>
    <property type="match status" value="1"/>
</dbReference>
<dbReference type="FunFam" id="1.20.5.620:FF:000002">
    <property type="entry name" value="ATP synthase subunit b"/>
    <property type="match status" value="1"/>
</dbReference>
<dbReference type="Gene3D" id="1.20.5.620">
    <property type="entry name" value="F1F0 ATP synthase subunit B, membrane domain"/>
    <property type="match status" value="1"/>
</dbReference>
<dbReference type="HAMAP" id="MF_01398">
    <property type="entry name" value="ATP_synth_b_bprime"/>
    <property type="match status" value="1"/>
</dbReference>
<dbReference type="InterPro" id="IPR028987">
    <property type="entry name" value="ATP_synth_B-like_membr_sf"/>
</dbReference>
<dbReference type="InterPro" id="IPR002146">
    <property type="entry name" value="ATP_synth_b/b'su_bac/chlpt"/>
</dbReference>
<dbReference type="InterPro" id="IPR005864">
    <property type="entry name" value="ATP_synth_F0_bsu_bac"/>
</dbReference>
<dbReference type="InterPro" id="IPR050059">
    <property type="entry name" value="ATP_synthase_B_chain"/>
</dbReference>
<dbReference type="NCBIfam" id="TIGR01144">
    <property type="entry name" value="ATP_synt_b"/>
    <property type="match status" value="1"/>
</dbReference>
<dbReference type="NCBIfam" id="NF004412">
    <property type="entry name" value="PRK05759.1-3"/>
    <property type="match status" value="1"/>
</dbReference>
<dbReference type="PANTHER" id="PTHR33445:SF1">
    <property type="entry name" value="ATP SYNTHASE SUBUNIT B"/>
    <property type="match status" value="1"/>
</dbReference>
<dbReference type="PANTHER" id="PTHR33445">
    <property type="entry name" value="ATP SYNTHASE SUBUNIT B', CHLOROPLASTIC"/>
    <property type="match status" value="1"/>
</dbReference>
<dbReference type="Pfam" id="PF00430">
    <property type="entry name" value="ATP-synt_B"/>
    <property type="match status" value="1"/>
</dbReference>
<dbReference type="SUPFAM" id="SSF81573">
    <property type="entry name" value="F1F0 ATP synthase subunit B, membrane domain"/>
    <property type="match status" value="1"/>
</dbReference>
<reference key="1">
    <citation type="journal article" date="2008" name="J. Bacteriol.">
        <title>Genome sequence of the streptomycin-producing microorganism Streptomyces griseus IFO 13350.</title>
        <authorList>
            <person name="Ohnishi Y."/>
            <person name="Ishikawa J."/>
            <person name="Hara H."/>
            <person name="Suzuki H."/>
            <person name="Ikenoya M."/>
            <person name="Ikeda H."/>
            <person name="Yamashita A."/>
            <person name="Hattori M."/>
            <person name="Horinouchi S."/>
        </authorList>
    </citation>
    <scope>NUCLEOTIDE SEQUENCE [LARGE SCALE GENOMIC DNA]</scope>
    <source>
        <strain>JCM 4626 / CBS 651.72 / NBRC 13350 / KCC S-0626 / ISP 5235</strain>
    </source>
</reference>
<sequence>MAVAPFDERSTMMYLAAEEPQMPLLPVWPEVVIGLICFGIVFFVFSKKLLPVINKTLEERREAIEGGIEKAESAQIEAQSVLEQYKAQLAEARHEAARLRQEAQEQGAVIIQEMKAEGQRQREEIIAAGHTQIEADRKAAASALRQDVGKLATDLAGKLVGESLQDHARQSGTVDRFLDELEAKAEAAR</sequence>
<feature type="chain" id="PRO_0000368819" description="ATP synthase subunit b">
    <location>
        <begin position="1"/>
        <end position="189"/>
    </location>
</feature>
<feature type="transmembrane region" description="Helical" evidence="1">
    <location>
        <begin position="25"/>
        <end position="45"/>
    </location>
</feature>
<evidence type="ECO:0000255" key="1">
    <source>
        <dbReference type="HAMAP-Rule" id="MF_01398"/>
    </source>
</evidence>
<name>ATPF_STRGG</name>
<accession>B1W0A7</accession>
<organism>
    <name type="scientific">Streptomyces griseus subsp. griseus (strain JCM 4626 / CBS 651.72 / NBRC 13350 / KCC S-0626 / ISP 5235)</name>
    <dbReference type="NCBI Taxonomy" id="455632"/>
    <lineage>
        <taxon>Bacteria</taxon>
        <taxon>Bacillati</taxon>
        <taxon>Actinomycetota</taxon>
        <taxon>Actinomycetes</taxon>
        <taxon>Kitasatosporales</taxon>
        <taxon>Streptomycetaceae</taxon>
        <taxon>Streptomyces</taxon>
    </lineage>
</organism>
<protein>
    <recommendedName>
        <fullName evidence="1">ATP synthase subunit b</fullName>
    </recommendedName>
    <alternativeName>
        <fullName evidence="1">ATP synthase F(0) sector subunit b</fullName>
    </alternativeName>
    <alternativeName>
        <fullName evidence="1">ATPase subunit I</fullName>
    </alternativeName>
    <alternativeName>
        <fullName evidence="1">F-type ATPase subunit b</fullName>
        <shortName evidence="1">F-ATPase subunit b</shortName>
    </alternativeName>
</protein>
<proteinExistence type="inferred from homology"/>
<gene>
    <name evidence="1" type="primary">atpF</name>
    <name type="ordered locus">SGR_2167</name>
</gene>